<name>HRF1_NPVLD</name>
<gene>
    <name type="primary">HRF-1</name>
    <name type="ordered locus">LdOrf-67</name>
</gene>
<dbReference type="EMBL" id="U38895">
    <property type="protein sequence ID" value="AAB07701.1"/>
    <property type="molecule type" value="Genomic_DNA"/>
</dbReference>
<dbReference type="EMBL" id="AF081810">
    <property type="protein sequence ID" value="AAC70253.1"/>
    <property type="molecule type" value="Genomic_DNA"/>
</dbReference>
<dbReference type="PIR" id="T30415">
    <property type="entry name" value="T30415"/>
</dbReference>
<dbReference type="RefSeq" id="NP_047704.1">
    <property type="nucleotide sequence ID" value="NC_001973.1"/>
</dbReference>
<dbReference type="KEGG" id="vg:1488617"/>
<dbReference type="OrthoDB" id="40736at10239"/>
<dbReference type="Proteomes" id="UP000203997">
    <property type="component" value="Genome"/>
</dbReference>
<comment type="function">
    <text>Facilitates AcMNPV replication in two non-permissive cell lines, IPLB-Ld652Y and IPLB-LdFB.</text>
</comment>
<sequence length="218" mass="25675">MGMDAEFFVDGERVDSYKCTGRWSAIVDVRHRPALTVRYRYERGYGHYALFVYFRHVATGMLETERVDVADRDRVVPVPEEWLEYIDDDDEERERQVEVFVCMKGDCYAHDGPLFVSEASKWCSREPEHVRIRDSPLEAVRQIKCAEDVFAFVEAFMRIEEGEYAWRDPLVIDQLNDQELASIEKVFASTVWNYYEKVNARPVLTFAENYLKKLNESL</sequence>
<feature type="chain" id="PRO_0000132813" description="Host range factor 1">
    <location>
        <begin position="1"/>
        <end position="218"/>
    </location>
</feature>
<organismHost>
    <name type="scientific">Lepidoptera</name>
    <name type="common">butterflies and moths</name>
    <dbReference type="NCBI Taxonomy" id="7088"/>
</organismHost>
<proteinExistence type="predicted"/>
<keyword id="KW-1185">Reference proteome</keyword>
<accession>Q90165</accession>
<protein>
    <recommendedName>
        <fullName>Host range factor 1</fullName>
    </recommendedName>
</protein>
<reference key="1">
    <citation type="journal article" date="1998" name="J. Virol.">
        <title>Lymantria dispar nucleopolyhedrovirus hrf-1 expands the larval host range of Autographa californica nucleopolyhedrovirus.</title>
        <authorList>
            <person name="Chen C.J."/>
            <person name="Quentin M.E."/>
            <person name="Brennan L.A."/>
            <person name="Kukel C."/>
            <person name="Thiem S.M."/>
        </authorList>
    </citation>
    <scope>NUCLEOTIDE SEQUENCE [GENOMIC DNA]</scope>
    <source>
        <strain>Hamden</strain>
    </source>
</reference>
<reference key="2">
    <citation type="journal article" date="1999" name="Virology">
        <title>Sequence and analysis of the genome of a baculovirus pathogenic for Lymantria dispar.</title>
        <authorList>
            <person name="Kuzio J."/>
            <person name="Pearson M.N."/>
            <person name="Harwood S.H."/>
            <person name="Funk C.J."/>
            <person name="Evans J.T."/>
            <person name="Slavicek J.M."/>
            <person name="Rohrmann G.F."/>
        </authorList>
    </citation>
    <scope>NUCLEOTIDE SEQUENCE [LARGE SCALE GENOMIC DNA]</scope>
    <source>
        <strain>Isolate Cl 5-6</strain>
    </source>
</reference>
<organism>
    <name type="scientific">Lymantria dispar multicapsid nuclear polyhedrosis virus</name>
    <name type="common">LdMNPV</name>
    <dbReference type="NCBI Taxonomy" id="10449"/>
    <lineage>
        <taxon>Viruses</taxon>
        <taxon>Viruses incertae sedis</taxon>
        <taxon>Naldaviricetes</taxon>
        <taxon>Lefavirales</taxon>
        <taxon>Baculoviridae</taxon>
        <taxon>Alphabaculovirus</taxon>
        <taxon>Alphabaculovirus lydisparis</taxon>
    </lineage>
</organism>